<reference key="1">
    <citation type="journal article" date="2004" name="Dev. Cell">
        <title>Tsukushi functions as an organizer inducer by inhibition of BMP activity in cooperation with chordin.</title>
        <authorList>
            <person name="Ohta K."/>
            <person name="Lupo G."/>
            <person name="Kuriyama S."/>
            <person name="Keynes R."/>
            <person name="Holt C.E."/>
            <person name="Harris W.A."/>
            <person name="Tanaka H."/>
            <person name="Ohnuma S."/>
        </authorList>
    </citation>
    <scope>NUCLEOTIDE SEQUENCE [MRNA] (ISOFORM 1)</scope>
    <scope>FUNCTION</scope>
    <scope>INTERACTION WITH CHRD; BMP4 AND BMP7</scope>
    <scope>SUBCELLULAR LOCATION</scope>
    <scope>TISSUE SPECIFICITY</scope>
    <scope>GLYCOSYLATION</scope>
</reference>
<reference key="2">
    <citation type="journal article" date="2006" name="Development">
        <title>Tsukushi controls ectodermal patterning and neural crest specification in Xenopus by direct regulation of BMP4 and X-delta-1 activity.</title>
        <authorList>
            <person name="Kuriyama S."/>
            <person name="Lupo G."/>
            <person name="Ohta K."/>
            <person name="Ohnuma S."/>
            <person name="Harris W.A."/>
            <person name="Tanaka H."/>
        </authorList>
    </citation>
    <scope>NUCLEOTIDE SEQUENCE [MRNA] (ISOFORM 2)</scope>
</reference>
<reference key="3">
    <citation type="journal article" date="2006" name="Development">
        <title>Tsukushi cooperates with VG1 to induce primitive streak and Hensen's node formation in the chick embryo.</title>
        <authorList>
            <person name="Ohta K."/>
            <person name="Kuriyama S."/>
            <person name="Okafuji T."/>
            <person name="Gejima R."/>
            <person name="Ohnuma S."/>
            <person name="Tanaka H."/>
        </authorList>
    </citation>
    <scope>FUNCTION (ISOFORMS 1 AND 2)</scope>
    <scope>INTERACTION WITH BMP4 AND VG1 (ISOFORM 1)</scope>
    <scope>INTERACTION WITH BMP4; BMP7 AND VG1 (ISOFORM 2)</scope>
    <scope>ALTERNATIVE SPLICING</scope>
    <scope>DEVELOPMENTAL STAGE (ISOFORMS 1 AND 2)</scope>
</reference>
<reference key="4">
    <citation type="journal article" date="2011" name="Proc. Natl. Acad. Sci. U.S.A.">
        <title>Tsukushi functions as a Wnt signaling inhibitor by competing with Wnt2b for binding to transmembrane protein Frizzled4.</title>
        <authorList>
            <person name="Ohta K."/>
            <person name="Ito A."/>
            <person name="Kuriyama S."/>
            <person name="Lupo G."/>
            <person name="Kosaka M."/>
            <person name="Ohnuma S."/>
            <person name="Nakagawa S."/>
            <person name="Tanaka H."/>
        </authorList>
    </citation>
    <scope>FUNCTION</scope>
    <scope>INTERACTION WITH FZD4</scope>
    <scope>TISSUE SPECIFICITY</scope>
</reference>
<reference key="5">
    <citation type="journal article" date="2015" name="Biochem. Biophys. Res. Commun.">
        <title>Tsukushi expression is dependent on Notch signaling and oscillated in the presomitic mesoderm during chick somitogenesis.</title>
        <authorList>
            <person name="Acharjee U.K."/>
            <person name="Gejima R."/>
            <person name="Felemban Athary Abdulhaleem M."/>
            <person name="Riyadh M.A."/>
            <person name="Tanaka H."/>
            <person name="Ohta K."/>
        </authorList>
    </citation>
    <scope>TISSUE SPECIFICITY</scope>
    <scope>DEVELOPMENTAL STAGE</scope>
</reference>
<keyword id="KW-0025">Alternative splicing</keyword>
<keyword id="KW-0217">Developmental protein</keyword>
<keyword id="KW-0325">Glycoprotein</keyword>
<keyword id="KW-0433">Leucine-rich repeat</keyword>
<keyword id="KW-1185">Reference proteome</keyword>
<keyword id="KW-0677">Repeat</keyword>
<keyword id="KW-0964">Secreted</keyword>
<keyword id="KW-0732">Signal</keyword>
<gene>
    <name type="primary">TSKU</name>
    <name type="synonym">LRRC54</name>
    <name type="synonym">TSK</name>
</gene>
<dbReference type="EMBL" id="AB100033">
    <property type="protein sequence ID" value="BAD44777.1"/>
    <property type="molecule type" value="mRNA"/>
</dbReference>
<dbReference type="EMBL" id="AB195969">
    <property type="protein sequence ID" value="BAD99276.1"/>
    <property type="molecule type" value="mRNA"/>
</dbReference>
<dbReference type="RefSeq" id="NP_001005346.1">
    <property type="nucleotide sequence ID" value="NM_001005346.1"/>
</dbReference>
<dbReference type="SMR" id="Q65Z91"/>
<dbReference type="FunCoup" id="Q65Z91">
    <property type="interactions" value="190"/>
</dbReference>
<dbReference type="STRING" id="9031.ENSGALP00000001104"/>
<dbReference type="GlyCosmos" id="Q65Z91">
    <property type="glycosylation" value="3 sites, No reported glycans"/>
</dbReference>
<dbReference type="GlyGen" id="Q65Z91">
    <property type="glycosylation" value="3 sites"/>
</dbReference>
<dbReference type="PaxDb" id="9031-ENSGALP00000001104"/>
<dbReference type="KEGG" id="gga:419088"/>
<dbReference type="VEuPathDB" id="HostDB:geneid_419088"/>
<dbReference type="eggNOG" id="KOG0619">
    <property type="taxonomic scope" value="Eukaryota"/>
</dbReference>
<dbReference type="InParanoid" id="Q65Z91"/>
<dbReference type="OrthoDB" id="676979at2759"/>
<dbReference type="PhylomeDB" id="Q65Z91"/>
<dbReference type="Reactome" id="R-GGA-140837">
    <property type="pathway name" value="Intrinsic Pathway of Fibrin Clot Formation"/>
</dbReference>
<dbReference type="Reactome" id="R-GGA-430116">
    <property type="pathway name" value="GP1b-IX-V activation signalling"/>
</dbReference>
<dbReference type="Reactome" id="R-GGA-75892">
    <property type="pathway name" value="Platelet Adhesion to exposed collagen"/>
</dbReference>
<dbReference type="Reactome" id="R-GGA-76009">
    <property type="pathway name" value="Platelet Aggregation (Plug Formation)"/>
</dbReference>
<dbReference type="PRO" id="PR:Q65Z91"/>
<dbReference type="Proteomes" id="UP000000539">
    <property type="component" value="Chromosome 1"/>
</dbReference>
<dbReference type="Bgee" id="ENSGALG00000000761">
    <property type="expression patterns" value="Expressed in colon and 11 other cell types or tissues"/>
</dbReference>
<dbReference type="GO" id="GO:0031012">
    <property type="term" value="C:extracellular matrix"/>
    <property type="evidence" value="ECO:0000318"/>
    <property type="project" value="GO_Central"/>
</dbReference>
<dbReference type="GO" id="GO:0005615">
    <property type="term" value="C:extracellular space"/>
    <property type="evidence" value="ECO:0000250"/>
    <property type="project" value="UniProtKB"/>
</dbReference>
<dbReference type="GO" id="GO:0036122">
    <property type="term" value="F:BMP binding"/>
    <property type="evidence" value="ECO:0000353"/>
    <property type="project" value="UniProtKB"/>
</dbReference>
<dbReference type="GO" id="GO:0098868">
    <property type="term" value="P:bone growth"/>
    <property type="evidence" value="ECO:0000250"/>
    <property type="project" value="UniProtKB"/>
</dbReference>
<dbReference type="GO" id="GO:0097009">
    <property type="term" value="P:energy homeostasis"/>
    <property type="evidence" value="ECO:0000250"/>
    <property type="project" value="UniProtKB"/>
</dbReference>
<dbReference type="GO" id="GO:0003431">
    <property type="term" value="P:growth plate cartilage chondrocyte development"/>
    <property type="evidence" value="ECO:0000250"/>
    <property type="project" value="UniProtKB"/>
</dbReference>
<dbReference type="GO" id="GO:0090009">
    <property type="term" value="P:primitive streak formation"/>
    <property type="evidence" value="ECO:0000315"/>
    <property type="project" value="UniProtKB"/>
</dbReference>
<dbReference type="FunFam" id="3.80.10.10:FF:000609">
    <property type="entry name" value="Tsukushi, small leucine rich proteoglycan"/>
    <property type="match status" value="1"/>
</dbReference>
<dbReference type="FunFam" id="3.80.10.10:FF:000308">
    <property type="entry name" value="tsukushin isoform X3"/>
    <property type="match status" value="1"/>
</dbReference>
<dbReference type="Gene3D" id="3.80.10.10">
    <property type="entry name" value="Ribonuclease Inhibitor"/>
    <property type="match status" value="3"/>
</dbReference>
<dbReference type="InterPro" id="IPR001611">
    <property type="entry name" value="Leu-rich_rpt"/>
</dbReference>
<dbReference type="InterPro" id="IPR003591">
    <property type="entry name" value="Leu-rich_rpt_typical-subtyp"/>
</dbReference>
<dbReference type="InterPro" id="IPR032675">
    <property type="entry name" value="LRR_dom_sf"/>
</dbReference>
<dbReference type="PANTHER" id="PTHR24366">
    <property type="entry name" value="IG(IMMUNOGLOBULIN) AND LRR(LEUCINE RICH REPEAT) DOMAINS"/>
    <property type="match status" value="1"/>
</dbReference>
<dbReference type="PANTHER" id="PTHR24366:SF96">
    <property type="entry name" value="LEUCINE RICH REPEAT CONTAINING 53"/>
    <property type="match status" value="1"/>
</dbReference>
<dbReference type="Pfam" id="PF00560">
    <property type="entry name" value="LRR_1"/>
    <property type="match status" value="1"/>
</dbReference>
<dbReference type="Pfam" id="PF13855">
    <property type="entry name" value="LRR_8"/>
    <property type="match status" value="2"/>
</dbReference>
<dbReference type="PRINTS" id="PR00019">
    <property type="entry name" value="LEURICHRPT"/>
</dbReference>
<dbReference type="SMART" id="SM00369">
    <property type="entry name" value="LRR_TYP"/>
    <property type="match status" value="7"/>
</dbReference>
<dbReference type="SUPFAM" id="SSF52058">
    <property type="entry name" value="L domain-like"/>
    <property type="match status" value="1"/>
</dbReference>
<dbReference type="PROSITE" id="PS51450">
    <property type="entry name" value="LRR"/>
    <property type="match status" value="8"/>
</dbReference>
<feature type="signal peptide" evidence="1">
    <location>
        <begin position="1"/>
        <end position="19"/>
    </location>
</feature>
<feature type="chain" id="PRO_0000240410" description="Tsukushi">
    <location>
        <begin position="20"/>
        <end position="369"/>
    </location>
</feature>
<feature type="domain" description="LRRNT">
    <location>
        <begin position="20"/>
        <end position="60"/>
    </location>
</feature>
<feature type="repeat" description="LRR 1">
    <location>
        <begin position="61"/>
        <end position="81"/>
    </location>
</feature>
<feature type="repeat" description="LRR 2">
    <location>
        <begin position="87"/>
        <end position="108"/>
    </location>
</feature>
<feature type="repeat" description="LRR 3">
    <location>
        <begin position="111"/>
        <end position="132"/>
    </location>
</feature>
<feature type="repeat" description="LRR 4">
    <location>
        <begin position="134"/>
        <end position="155"/>
    </location>
</feature>
<feature type="repeat" description="LRR 5">
    <location>
        <begin position="161"/>
        <end position="181"/>
    </location>
</feature>
<feature type="repeat" description="LRR 6">
    <location>
        <begin position="184"/>
        <end position="205"/>
    </location>
</feature>
<feature type="repeat" description="LRR 7">
    <location>
        <begin position="206"/>
        <end position="226"/>
    </location>
</feature>
<feature type="repeat" description="LRR 8">
    <location>
        <begin position="229"/>
        <end position="248"/>
    </location>
</feature>
<feature type="repeat" description="LRR 9">
    <location>
        <begin position="254"/>
        <end position="276"/>
    </location>
</feature>
<feature type="repeat" description="LRR 10">
    <location>
        <begin position="279"/>
        <end position="300"/>
    </location>
</feature>
<feature type="repeat" description="LRR 11">
    <location>
        <begin position="303"/>
        <end position="323"/>
    </location>
</feature>
<feature type="glycosylation site" description="N-linked (GlcNAc...) asparagine" evidence="1">
    <location>
        <position position="76"/>
    </location>
</feature>
<feature type="glycosylation site" description="N-linked (GlcNAc...) asparagine" evidence="1">
    <location>
        <position position="189"/>
    </location>
</feature>
<feature type="glycosylation site" description="N-linked (GlcNAc...) asparagine" evidence="1">
    <location>
        <position position="284"/>
    </location>
</feature>
<feature type="splice variant" id="VSP_019375" description="In isoform 2." evidence="7">
    <original>LGLGAEELLWCKTPCPRPVCRCRDKPLQSAPQNLPTP</original>
    <variation>KGVLSCHDSHGAVAAAPYVL</variation>
    <location>
        <begin position="333"/>
        <end position="369"/>
    </location>
</feature>
<feature type="sequence conflict" description="In Ref. 2; BAD99276." evidence="9" ref="2">
    <original>T</original>
    <variation>A</variation>
    <location>
        <position position="104"/>
    </location>
</feature>
<feature type="sequence conflict" description="In Ref. 2; BAD99276." evidence="9" ref="2">
    <original>L</original>
    <variation>P</variation>
    <location>
        <position position="235"/>
    </location>
</feature>
<name>TSK_CHICK</name>
<evidence type="ECO:0000255" key="1"/>
<evidence type="ECO:0000269" key="2">
    <source>
    </source>
</evidence>
<evidence type="ECO:0000269" key="3">
    <source>
    </source>
</evidence>
<evidence type="ECO:0000269" key="4">
    <source>
    </source>
</evidence>
<evidence type="ECO:0000269" key="5">
    <source>
    </source>
</evidence>
<evidence type="ECO:0000303" key="6">
    <source>
    </source>
</evidence>
<evidence type="ECO:0000303" key="7">
    <source>
    </source>
</evidence>
<evidence type="ECO:0000303" key="8">
    <source>
    </source>
</evidence>
<evidence type="ECO:0000305" key="9"/>
<sequence length="369" mass="40710">MQFLAWFNMLLLLPCFSTTKTCFPGCHCEVESFGLFDSFSLTKVDCSGIGSHIVPVPIPLDTSYLDLSSNKLETINESMLTGPGYTTLVSLDLSYNNIAKISSTTFSRLRYLESLDLSHNSLEVLPEDCFSSSPLGDIDLSNNKLLDIALDVFASKGQGKPLNVDLSNNMLSKITRNHEKSIPNIQNLNLSGNRLTSVPNLQGIPLRYLNLDGNPLAKIEKGDFKGLKGLIHLSLSGLHDFRELSPYSFKELPALQVLDLSNNPNLRSLTAEVIFGLNSIQELNLSGTGVSSLPKTVLKYLPSLKSITLRKNIQCFKTIKEGQYHRQIGLTKLGLGAEELLWCKTPCPRPVCRCRDKPLQSAPQNLPTP</sequence>
<comment type="function">
    <text evidence="2 3 4">Contributes to various developmental events through its interactions with multiple signaling pathways (PubMed:15363410, PubMed:16943268, PubMed:21856951). Dorsalizing factor involved in the induction of Hensen's node by inhibiting bone morphogenetic proteins during gastrulation and by enhancing DVR1/VG1 activity (PubMed:15363410, PubMed:16943268). Wnt signaling inhibitor which competes with WNT2B for binding to Wnt receptor FZD4 and represses WNT2B-dependent development of the peripheral eye (PubMed:21856951).</text>
</comment>
<comment type="function">
    <molecule>Isoform 1</molecule>
    <text evidence="3">Shows strong bone morphogenetic protein antagonistic activity.</text>
</comment>
<comment type="function">
    <molecule>Isoform 2</molecule>
    <text evidence="3">Shows weak bone morphogenetic protein antagonistic activity.</text>
</comment>
<comment type="subunit">
    <text evidence="2">Forms a ternary complex with chordin/CHRD and BMP4.</text>
</comment>
<comment type="subunit">
    <molecule>Isoform 1</molecule>
    <text evidence="2 3 4">Interacts with FZD4 (via FZ domain); competes with WNT2B for binding to FZD4, inhibiting Wnt signaling and repressing peripheral eye development (PubMed:21856951). Interacts with BMP4; shows stronger interaction with BMP4 than isoform 2 (PubMed:16943268). Interacts with DVR1/VG1; the interaction is inhibited by BMP4 (PubMed:16943268). Interacts with BMP7 (PubMed:15363410).</text>
</comment>
<comment type="subunit">
    <molecule>Isoform 2</molecule>
    <text evidence="3 4">Interacts with FZD4 (via FZ domain); competes with WNT2B for binding to FZD4, inhibiting Wnt signaling and repressing peripheral eye development (PubMed:21856951). Interacts with BMP4; shows weaker interaction with BMP4 than isoform 1 (PubMed:16943268). Interacts with DVR1/VG1; the interaction is inhibited by BMP4 (PubMed:16943268). Interacts with BMP7 (PubMed:16943268).</text>
</comment>
<comment type="subcellular location">
    <subcellularLocation>
        <location evidence="2">Secreted</location>
    </subcellularLocation>
</comment>
<comment type="alternative products">
    <event type="alternative splicing"/>
    <isoform>
        <id>Q65Z91-1</id>
        <name>1</name>
        <name evidence="8">TSKA</name>
        <sequence type="displayed"/>
    </isoform>
    <isoform>
        <id>Q65Z91-2</id>
        <name>2</name>
        <name evidence="8">TSKB</name>
        <sequence type="described" ref="VSP_019375"/>
    </isoform>
</comment>
<comment type="tissue specificity">
    <text evidence="2 4 5">During embryonic development, expressed in the middle primitive streak and Hensen's node (PubMed:15363410). Expressed in the peripheral region of the developing eye (PubMed:21856951). Expressed in the presomitic mesoderm during somitogenesis in a NOTCH-dependent manner (PubMed:26299926).</text>
</comment>
<comment type="developmental stage">
    <text evidence="5">In the presomitic mesoderm (PSM), expression is first detected at stage 7 where the first somite pair originates from both sides of the neural tube (PubMed:26299926). At stage 15, expression is detected in the anterior PSM (PubMed:26299926). During stage 18, also expressed in the newly forming somites and the PSM that reaches beyond the leg bud (PubMed:26299926). At stage 23, expressed in the somites and PSM near the tip of the tail and also in the wing and leg buds (PubMed:26299926).</text>
</comment>
<comment type="developmental stage">
    <molecule>Isoform 1</molecule>
    <text evidence="3">Expressed throughout the emerging primitive streak at stage 2 (PubMed:16943268). At stage 3, expressed in both the anterior and posterior parts of the primitive streak (PubMed:16943268). At stage 4, expressed in Hensen's node and the anterior part of the primitive streak (PubMed:16943268). At all stages, expressed at lower levels than isoform 2 (PubMed:16943268).</text>
</comment>
<comment type="developmental stage">
    <molecule>Isoform 2</molecule>
    <text evidence="3">Expressed throughout the emerging primitive streak at stage 2 (PubMed:16943268). At stage 3, expressed in both the anterior and posterior parts of the primitive streak (PubMed:16943268). At stage 4, expressed in Hensen's node and throughout the anterior, middle and posterior part of the primitive streak with a peak of expression in the middle part (PubMed:16943268). At all stages, expressed at higher levels than isoform 1 (PubMed:16943268).</text>
</comment>
<comment type="PTM">
    <text evidence="2">N-glycosylated.</text>
</comment>
<comment type="miscellaneous">
    <text evidence="6">This factor is named 'Tsukushi' because its expression pattern in chick embryos is similar to the shape of the Japanese horsetail plant, tsukushi.</text>
</comment>
<accession>Q65Z91</accession>
<accession>Q4W6V7</accession>
<proteinExistence type="evidence at protein level"/>
<organism>
    <name type="scientific">Gallus gallus</name>
    <name type="common">Chicken</name>
    <dbReference type="NCBI Taxonomy" id="9031"/>
    <lineage>
        <taxon>Eukaryota</taxon>
        <taxon>Metazoa</taxon>
        <taxon>Chordata</taxon>
        <taxon>Craniata</taxon>
        <taxon>Vertebrata</taxon>
        <taxon>Euteleostomi</taxon>
        <taxon>Archelosauria</taxon>
        <taxon>Archosauria</taxon>
        <taxon>Dinosauria</taxon>
        <taxon>Saurischia</taxon>
        <taxon>Theropoda</taxon>
        <taxon>Coelurosauria</taxon>
        <taxon>Aves</taxon>
        <taxon>Neognathae</taxon>
        <taxon>Galloanserae</taxon>
        <taxon>Galliformes</taxon>
        <taxon>Phasianidae</taxon>
        <taxon>Phasianinae</taxon>
        <taxon>Gallus</taxon>
    </lineage>
</organism>
<protein>
    <recommendedName>
        <fullName evidence="6">Tsukushi</fullName>
    </recommendedName>
    <alternativeName>
        <fullName>C-TSK</fullName>
    </alternativeName>
    <alternativeName>
        <fullName>Leucine-rich repeat-containing protein 54</fullName>
    </alternativeName>
</protein>